<keyword id="KW-0012">Acyltransferase</keyword>
<keyword id="KW-0808">Transferase</keyword>
<name>Y4025_BACC3</name>
<gene>
    <name type="ordered locus">BCA_4025</name>
</gene>
<proteinExistence type="inferred from homology"/>
<dbReference type="EC" id="2.3.1.-" evidence="1"/>
<dbReference type="EMBL" id="CP001407">
    <property type="protein sequence ID" value="ACO26833.1"/>
    <property type="molecule type" value="Genomic_DNA"/>
</dbReference>
<dbReference type="RefSeq" id="WP_000506702.1">
    <property type="nucleotide sequence ID" value="NZ_CP009318.1"/>
</dbReference>
<dbReference type="SMR" id="C1EPT5"/>
<dbReference type="KEGG" id="bcx:BCA_4025"/>
<dbReference type="PATRIC" id="fig|572264.18.peg.3978"/>
<dbReference type="Proteomes" id="UP000002210">
    <property type="component" value="Chromosome"/>
</dbReference>
<dbReference type="GO" id="GO:0016747">
    <property type="term" value="F:acyltransferase activity, transferring groups other than amino-acyl groups"/>
    <property type="evidence" value="ECO:0007669"/>
    <property type="project" value="UniProtKB-UniRule"/>
</dbReference>
<dbReference type="CDD" id="cd04301">
    <property type="entry name" value="NAT_SF"/>
    <property type="match status" value="1"/>
</dbReference>
<dbReference type="Gene3D" id="3.40.630.30">
    <property type="match status" value="1"/>
</dbReference>
<dbReference type="HAMAP" id="MF_00824">
    <property type="entry name" value="Acetyltransf_YlbP"/>
    <property type="match status" value="1"/>
</dbReference>
<dbReference type="InterPro" id="IPR016181">
    <property type="entry name" value="Acyl_CoA_acyltransferase"/>
</dbReference>
<dbReference type="InterPro" id="IPR000182">
    <property type="entry name" value="GNAT_dom"/>
</dbReference>
<dbReference type="InterPro" id="IPR017274">
    <property type="entry name" value="YlbP"/>
</dbReference>
<dbReference type="NCBIfam" id="NF010241">
    <property type="entry name" value="PRK13688.1"/>
    <property type="match status" value="1"/>
</dbReference>
<dbReference type="Pfam" id="PF00583">
    <property type="entry name" value="Acetyltransf_1"/>
    <property type="match status" value="1"/>
</dbReference>
<dbReference type="PIRSF" id="PIRSF037732">
    <property type="entry name" value="YlbP_prd"/>
    <property type="match status" value="1"/>
</dbReference>
<dbReference type="SUPFAM" id="SSF55729">
    <property type="entry name" value="Acyl-CoA N-acyltransferases (Nat)"/>
    <property type="match status" value="1"/>
</dbReference>
<accession>C1EPT5</accession>
<reference key="1">
    <citation type="submission" date="2009-02" db="EMBL/GenBank/DDBJ databases">
        <title>Genome sequence of Bacillus cereus 03BB102.</title>
        <authorList>
            <person name="Dodson R.J."/>
            <person name="Jackson P."/>
            <person name="Munk A.C."/>
            <person name="Brettin T."/>
            <person name="Bruce D."/>
            <person name="Detter C."/>
            <person name="Tapia R."/>
            <person name="Han C."/>
            <person name="Sutton G."/>
            <person name="Sims D."/>
        </authorList>
    </citation>
    <scope>NUCLEOTIDE SEQUENCE [LARGE SCALE GENOMIC DNA]</scope>
    <source>
        <strain>03BB102</strain>
    </source>
</reference>
<sequence length="157" mass="17967">MGFPKVERLLINYKTLDEFKKFKGCGAQELSMLEELQANIIENDSESPFYGIYYGGSLIARMSLYMKRNGGEPFEITGTYLELYKLEVLPNFQKQGFGEMLVNYAKGLQFPIKTIARIHSAGFWDKLNFQPVSVPDGDFYVWHPEVNLNTVTNEESA</sequence>
<feature type="chain" id="PRO_1000148763" description="Uncharacterized N-acetyltransferase BCA_4025">
    <location>
        <begin position="1"/>
        <end position="157"/>
    </location>
</feature>
<feature type="domain" description="N-acetyltransferase" evidence="1">
    <location>
        <begin position="9"/>
        <end position="147"/>
    </location>
</feature>
<organism>
    <name type="scientific">Bacillus cereus (strain 03BB102)</name>
    <dbReference type="NCBI Taxonomy" id="572264"/>
    <lineage>
        <taxon>Bacteria</taxon>
        <taxon>Bacillati</taxon>
        <taxon>Bacillota</taxon>
        <taxon>Bacilli</taxon>
        <taxon>Bacillales</taxon>
        <taxon>Bacillaceae</taxon>
        <taxon>Bacillus</taxon>
        <taxon>Bacillus cereus group</taxon>
    </lineage>
</organism>
<evidence type="ECO:0000255" key="1">
    <source>
        <dbReference type="HAMAP-Rule" id="MF_00824"/>
    </source>
</evidence>
<protein>
    <recommendedName>
        <fullName evidence="1">Uncharacterized N-acetyltransferase BCA_4025</fullName>
        <ecNumber evidence="1">2.3.1.-</ecNumber>
    </recommendedName>
</protein>